<comment type="function">
    <text evidence="1">Digests double-stranded RNA. Involved in the processing of primary rRNA transcript to yield the immediate precursors to the large and small rRNAs (23S and 16S). Processes some mRNAs, and tRNAs when they are encoded in the rRNA operon. Processes pre-crRNA and tracrRNA of type II CRISPR loci if present in the organism.</text>
</comment>
<comment type="catalytic activity">
    <reaction evidence="1">
        <text>Endonucleolytic cleavage to 5'-phosphomonoester.</text>
        <dbReference type="EC" id="3.1.26.3"/>
    </reaction>
</comment>
<comment type="cofactor">
    <cofactor evidence="1">
        <name>Mg(2+)</name>
        <dbReference type="ChEBI" id="CHEBI:18420"/>
    </cofactor>
</comment>
<comment type="subunit">
    <text evidence="1">Homodimer.</text>
</comment>
<comment type="subcellular location">
    <subcellularLocation>
        <location evidence="1">Cytoplasm</location>
    </subcellularLocation>
</comment>
<comment type="similarity">
    <text evidence="1">Belongs to the ribonuclease III family.</text>
</comment>
<proteinExistence type="inferred from homology"/>
<dbReference type="EC" id="3.1.26.3" evidence="1"/>
<dbReference type="EMBL" id="AL766846">
    <property type="protein sequence ID" value="CAD46389.1"/>
    <property type="molecule type" value="Genomic_DNA"/>
</dbReference>
<dbReference type="RefSeq" id="WP_000661526.1">
    <property type="nucleotide sequence ID" value="NC_004368.1"/>
</dbReference>
<dbReference type="SMR" id="Q8E680"/>
<dbReference type="GeneID" id="66885626"/>
<dbReference type="KEGG" id="san:gbs0745"/>
<dbReference type="eggNOG" id="COG0571">
    <property type="taxonomic scope" value="Bacteria"/>
</dbReference>
<dbReference type="HOGENOM" id="CLU_000907_1_3_9"/>
<dbReference type="Proteomes" id="UP000000823">
    <property type="component" value="Chromosome"/>
</dbReference>
<dbReference type="GO" id="GO:0005737">
    <property type="term" value="C:cytoplasm"/>
    <property type="evidence" value="ECO:0007669"/>
    <property type="project" value="UniProtKB-SubCell"/>
</dbReference>
<dbReference type="GO" id="GO:0003725">
    <property type="term" value="F:double-stranded RNA binding"/>
    <property type="evidence" value="ECO:0007669"/>
    <property type="project" value="TreeGrafter"/>
</dbReference>
<dbReference type="GO" id="GO:0046872">
    <property type="term" value="F:metal ion binding"/>
    <property type="evidence" value="ECO:0007669"/>
    <property type="project" value="UniProtKB-KW"/>
</dbReference>
<dbReference type="GO" id="GO:0004525">
    <property type="term" value="F:ribonuclease III activity"/>
    <property type="evidence" value="ECO:0007669"/>
    <property type="project" value="UniProtKB-UniRule"/>
</dbReference>
<dbReference type="GO" id="GO:0019843">
    <property type="term" value="F:rRNA binding"/>
    <property type="evidence" value="ECO:0007669"/>
    <property type="project" value="UniProtKB-KW"/>
</dbReference>
<dbReference type="GO" id="GO:0006397">
    <property type="term" value="P:mRNA processing"/>
    <property type="evidence" value="ECO:0007669"/>
    <property type="project" value="UniProtKB-UniRule"/>
</dbReference>
<dbReference type="GO" id="GO:0010468">
    <property type="term" value="P:regulation of gene expression"/>
    <property type="evidence" value="ECO:0007669"/>
    <property type="project" value="TreeGrafter"/>
</dbReference>
<dbReference type="GO" id="GO:0006364">
    <property type="term" value="P:rRNA processing"/>
    <property type="evidence" value="ECO:0007669"/>
    <property type="project" value="UniProtKB-UniRule"/>
</dbReference>
<dbReference type="GO" id="GO:0008033">
    <property type="term" value="P:tRNA processing"/>
    <property type="evidence" value="ECO:0007669"/>
    <property type="project" value="UniProtKB-KW"/>
</dbReference>
<dbReference type="CDD" id="cd10845">
    <property type="entry name" value="DSRM_RNAse_III_family"/>
    <property type="match status" value="1"/>
</dbReference>
<dbReference type="CDD" id="cd00593">
    <property type="entry name" value="RIBOc"/>
    <property type="match status" value="1"/>
</dbReference>
<dbReference type="FunFam" id="1.10.1520.10:FF:000001">
    <property type="entry name" value="Ribonuclease 3"/>
    <property type="match status" value="1"/>
</dbReference>
<dbReference type="FunFam" id="3.30.160.20:FF:000003">
    <property type="entry name" value="Ribonuclease 3"/>
    <property type="match status" value="1"/>
</dbReference>
<dbReference type="Gene3D" id="3.30.160.20">
    <property type="match status" value="1"/>
</dbReference>
<dbReference type="Gene3D" id="1.10.1520.10">
    <property type="entry name" value="Ribonuclease III domain"/>
    <property type="match status" value="1"/>
</dbReference>
<dbReference type="HAMAP" id="MF_00104">
    <property type="entry name" value="RNase_III"/>
    <property type="match status" value="1"/>
</dbReference>
<dbReference type="InterPro" id="IPR014720">
    <property type="entry name" value="dsRBD_dom"/>
</dbReference>
<dbReference type="InterPro" id="IPR011907">
    <property type="entry name" value="RNase_III"/>
</dbReference>
<dbReference type="InterPro" id="IPR000999">
    <property type="entry name" value="RNase_III_dom"/>
</dbReference>
<dbReference type="InterPro" id="IPR036389">
    <property type="entry name" value="RNase_III_sf"/>
</dbReference>
<dbReference type="NCBIfam" id="TIGR02191">
    <property type="entry name" value="RNaseIII"/>
    <property type="match status" value="1"/>
</dbReference>
<dbReference type="PANTHER" id="PTHR11207:SF0">
    <property type="entry name" value="RIBONUCLEASE 3"/>
    <property type="match status" value="1"/>
</dbReference>
<dbReference type="PANTHER" id="PTHR11207">
    <property type="entry name" value="RIBONUCLEASE III"/>
    <property type="match status" value="1"/>
</dbReference>
<dbReference type="Pfam" id="PF00035">
    <property type="entry name" value="dsrm"/>
    <property type="match status" value="1"/>
</dbReference>
<dbReference type="Pfam" id="PF14622">
    <property type="entry name" value="Ribonucleas_3_3"/>
    <property type="match status" value="1"/>
</dbReference>
<dbReference type="SMART" id="SM00358">
    <property type="entry name" value="DSRM"/>
    <property type="match status" value="1"/>
</dbReference>
<dbReference type="SMART" id="SM00535">
    <property type="entry name" value="RIBOc"/>
    <property type="match status" value="1"/>
</dbReference>
<dbReference type="SUPFAM" id="SSF54768">
    <property type="entry name" value="dsRNA-binding domain-like"/>
    <property type="match status" value="1"/>
</dbReference>
<dbReference type="SUPFAM" id="SSF69065">
    <property type="entry name" value="RNase III domain-like"/>
    <property type="match status" value="1"/>
</dbReference>
<dbReference type="PROSITE" id="PS50137">
    <property type="entry name" value="DS_RBD"/>
    <property type="match status" value="1"/>
</dbReference>
<dbReference type="PROSITE" id="PS00517">
    <property type="entry name" value="RNASE_3_1"/>
    <property type="match status" value="1"/>
</dbReference>
<dbReference type="PROSITE" id="PS50142">
    <property type="entry name" value="RNASE_3_2"/>
    <property type="match status" value="1"/>
</dbReference>
<protein>
    <recommendedName>
        <fullName evidence="1">Ribonuclease 3</fullName>
        <ecNumber evidence="1">3.1.26.3</ecNumber>
    </recommendedName>
    <alternativeName>
        <fullName evidence="1">Ribonuclease III</fullName>
        <shortName evidence="1">RNase III</shortName>
    </alternativeName>
</protein>
<reference key="1">
    <citation type="journal article" date="2002" name="Mol. Microbiol.">
        <title>Genome sequence of Streptococcus agalactiae, a pathogen causing invasive neonatal disease.</title>
        <authorList>
            <person name="Glaser P."/>
            <person name="Rusniok C."/>
            <person name="Buchrieser C."/>
            <person name="Chevalier F."/>
            <person name="Frangeul L."/>
            <person name="Msadek T."/>
            <person name="Zouine M."/>
            <person name="Couve E."/>
            <person name="Lalioui L."/>
            <person name="Poyart C."/>
            <person name="Trieu-Cuot P."/>
            <person name="Kunst F."/>
        </authorList>
    </citation>
    <scope>NUCLEOTIDE SEQUENCE [LARGE SCALE GENOMIC DNA]</scope>
    <source>
        <strain>NEM316</strain>
    </source>
</reference>
<feature type="chain" id="PRO_0000228588" description="Ribonuclease 3">
    <location>
        <begin position="1"/>
        <end position="228"/>
    </location>
</feature>
<feature type="domain" description="RNase III" evidence="1">
    <location>
        <begin position="5"/>
        <end position="134"/>
    </location>
</feature>
<feature type="domain" description="DRBM" evidence="1">
    <location>
        <begin position="160"/>
        <end position="228"/>
    </location>
</feature>
<feature type="active site" evidence="1">
    <location>
        <position position="51"/>
    </location>
</feature>
<feature type="active site" evidence="1">
    <location>
        <position position="123"/>
    </location>
</feature>
<feature type="binding site" evidence="1">
    <location>
        <position position="47"/>
    </location>
    <ligand>
        <name>Mg(2+)</name>
        <dbReference type="ChEBI" id="CHEBI:18420"/>
    </ligand>
</feature>
<feature type="binding site" evidence="1">
    <location>
        <position position="120"/>
    </location>
    <ligand>
        <name>Mg(2+)</name>
        <dbReference type="ChEBI" id="CHEBI:18420"/>
    </ligand>
</feature>
<feature type="binding site" evidence="1">
    <location>
        <position position="123"/>
    </location>
    <ligand>
        <name>Mg(2+)</name>
        <dbReference type="ChEBI" id="CHEBI:18420"/>
    </ligand>
</feature>
<evidence type="ECO:0000255" key="1">
    <source>
        <dbReference type="HAMAP-Rule" id="MF_00104"/>
    </source>
</evidence>
<name>RNC_STRA3</name>
<keyword id="KW-0963">Cytoplasm</keyword>
<keyword id="KW-0255">Endonuclease</keyword>
<keyword id="KW-0378">Hydrolase</keyword>
<keyword id="KW-0460">Magnesium</keyword>
<keyword id="KW-0479">Metal-binding</keyword>
<keyword id="KW-0507">mRNA processing</keyword>
<keyword id="KW-0540">Nuclease</keyword>
<keyword id="KW-0694">RNA-binding</keyword>
<keyword id="KW-0698">rRNA processing</keyword>
<keyword id="KW-0699">rRNA-binding</keyword>
<keyword id="KW-0819">tRNA processing</keyword>
<gene>
    <name evidence="1" type="primary">rnc</name>
    <name type="ordered locus">gbs0745</name>
</gene>
<sequence>MKELRSKLEKDYGIVFANQELLDTAFTHTSYANEHRLLNISHNERLEFLGDAVLQLLISQYLFTKYPQKAEGDLSKLRSMIVREESLAGFSRLCGFDHYIKLGKGEEKSGGRNRDTILGDLFEAFLGALLLDKGVEVVHAFVNKVMIPHVEKGTYERVKDYKTSLQELLQSHGDVKIDYQVTNESGPAHAKEFEVTVSVNQENLSQGIGRSKKAAEQDAAKNALATLQ</sequence>
<organism>
    <name type="scientific">Streptococcus agalactiae serotype III (strain NEM316)</name>
    <dbReference type="NCBI Taxonomy" id="211110"/>
    <lineage>
        <taxon>Bacteria</taxon>
        <taxon>Bacillati</taxon>
        <taxon>Bacillota</taxon>
        <taxon>Bacilli</taxon>
        <taxon>Lactobacillales</taxon>
        <taxon>Streptococcaceae</taxon>
        <taxon>Streptococcus</taxon>
    </lineage>
</organism>
<accession>Q8E680</accession>